<reference key="1">
    <citation type="submission" date="2006-01" db="EMBL/GenBank/DDBJ databases">
        <title>Complete sequence of Anaeromyxobacter dehalogenans 2CP-C.</title>
        <authorList>
            <person name="Copeland A."/>
            <person name="Lucas S."/>
            <person name="Lapidus A."/>
            <person name="Barry K."/>
            <person name="Detter J.C."/>
            <person name="Glavina T."/>
            <person name="Hammon N."/>
            <person name="Israni S."/>
            <person name="Pitluck S."/>
            <person name="Brettin T."/>
            <person name="Bruce D."/>
            <person name="Han C."/>
            <person name="Tapia R."/>
            <person name="Gilna P."/>
            <person name="Kiss H."/>
            <person name="Schmutz J."/>
            <person name="Larimer F."/>
            <person name="Land M."/>
            <person name="Kyrpides N."/>
            <person name="Anderson I."/>
            <person name="Sanford R.A."/>
            <person name="Ritalahti K.M."/>
            <person name="Thomas H.S."/>
            <person name="Kirby J.R."/>
            <person name="Zhulin I.B."/>
            <person name="Loeffler F.E."/>
            <person name="Richardson P."/>
        </authorList>
    </citation>
    <scope>NUCLEOTIDE SEQUENCE [LARGE SCALE GENOMIC DNA]</scope>
    <source>
        <strain>2CP-C</strain>
    </source>
</reference>
<proteinExistence type="inferred from homology"/>
<sequence length="294" mass="31963">MTATVSHAGPQVVILTGVSGSGKSTALRALEDAGFYCVDNLPIVFLEKLLELSGHTAGEVSRMALVVDAREGRFLVEAPRVIRELRQKGADVEVLFLDASDEALVRRYSETRRRHPLAGEGGTVPDGIAAERLALADVRGIADEVIDTTTLNVHELKRLVTRRFVAGDGAKLGVTLVSFGFRFGIPTHADLVLDVRFLPNPFFVPELKPHPGTDPRVAEFVLGQADAKAFLERLVDLLGFLLPRYRNEGKSYLTIAIGCTGGKHRSVALAAALAERLEGSGQPVRLWHRDVEKE</sequence>
<keyword id="KW-0067">ATP-binding</keyword>
<keyword id="KW-0342">GTP-binding</keyword>
<keyword id="KW-0547">Nucleotide-binding</keyword>
<keyword id="KW-1185">Reference proteome</keyword>
<comment type="function">
    <text evidence="1">Displays ATPase and GTPase activities.</text>
</comment>
<comment type="similarity">
    <text evidence="1">Belongs to the RapZ-like family.</text>
</comment>
<dbReference type="EMBL" id="CP000251">
    <property type="protein sequence ID" value="ABC79924.1"/>
    <property type="molecule type" value="Genomic_DNA"/>
</dbReference>
<dbReference type="RefSeq" id="WP_011419207.1">
    <property type="nucleotide sequence ID" value="NC_007760.1"/>
</dbReference>
<dbReference type="SMR" id="Q2IM96"/>
<dbReference type="STRING" id="290397.Adeh_0147"/>
<dbReference type="KEGG" id="ade:Adeh_0147"/>
<dbReference type="eggNOG" id="COG1660">
    <property type="taxonomic scope" value="Bacteria"/>
</dbReference>
<dbReference type="HOGENOM" id="CLU_059558_0_0_7"/>
<dbReference type="OrthoDB" id="9784461at2"/>
<dbReference type="Proteomes" id="UP000001935">
    <property type="component" value="Chromosome"/>
</dbReference>
<dbReference type="GO" id="GO:0005524">
    <property type="term" value="F:ATP binding"/>
    <property type="evidence" value="ECO:0007669"/>
    <property type="project" value="UniProtKB-UniRule"/>
</dbReference>
<dbReference type="GO" id="GO:0016887">
    <property type="term" value="F:ATP hydrolysis activity"/>
    <property type="evidence" value="ECO:0007669"/>
    <property type="project" value="InterPro"/>
</dbReference>
<dbReference type="GO" id="GO:0005525">
    <property type="term" value="F:GTP binding"/>
    <property type="evidence" value="ECO:0007669"/>
    <property type="project" value="UniProtKB-UniRule"/>
</dbReference>
<dbReference type="Gene3D" id="3.40.50.300">
    <property type="entry name" value="P-loop containing nucleotide triphosphate hydrolases"/>
    <property type="match status" value="1"/>
</dbReference>
<dbReference type="HAMAP" id="MF_00636">
    <property type="entry name" value="RapZ_like"/>
    <property type="match status" value="1"/>
</dbReference>
<dbReference type="InterPro" id="IPR003593">
    <property type="entry name" value="AAA+_ATPase"/>
</dbReference>
<dbReference type="InterPro" id="IPR027417">
    <property type="entry name" value="P-loop_NTPase"/>
</dbReference>
<dbReference type="InterPro" id="IPR005337">
    <property type="entry name" value="RapZ-like"/>
</dbReference>
<dbReference type="InterPro" id="IPR053930">
    <property type="entry name" value="RapZ-like_N"/>
</dbReference>
<dbReference type="InterPro" id="IPR053931">
    <property type="entry name" value="RapZ_C"/>
</dbReference>
<dbReference type="NCBIfam" id="NF003828">
    <property type="entry name" value="PRK05416.1"/>
    <property type="match status" value="1"/>
</dbReference>
<dbReference type="PANTHER" id="PTHR30448">
    <property type="entry name" value="RNASE ADAPTER PROTEIN RAPZ"/>
    <property type="match status" value="1"/>
</dbReference>
<dbReference type="PANTHER" id="PTHR30448:SF0">
    <property type="entry name" value="RNASE ADAPTER PROTEIN RAPZ"/>
    <property type="match status" value="1"/>
</dbReference>
<dbReference type="Pfam" id="PF22740">
    <property type="entry name" value="PapZ_C"/>
    <property type="match status" value="1"/>
</dbReference>
<dbReference type="Pfam" id="PF03668">
    <property type="entry name" value="RapZ-like_N"/>
    <property type="match status" value="1"/>
</dbReference>
<dbReference type="PIRSF" id="PIRSF005052">
    <property type="entry name" value="P-loopkin"/>
    <property type="match status" value="1"/>
</dbReference>
<dbReference type="SMART" id="SM00382">
    <property type="entry name" value="AAA"/>
    <property type="match status" value="1"/>
</dbReference>
<dbReference type="SUPFAM" id="SSF52540">
    <property type="entry name" value="P-loop containing nucleoside triphosphate hydrolases"/>
    <property type="match status" value="1"/>
</dbReference>
<gene>
    <name type="ordered locus">Adeh_0147</name>
</gene>
<evidence type="ECO:0000255" key="1">
    <source>
        <dbReference type="HAMAP-Rule" id="MF_00636"/>
    </source>
</evidence>
<organism>
    <name type="scientific">Anaeromyxobacter dehalogenans (strain 2CP-C)</name>
    <dbReference type="NCBI Taxonomy" id="290397"/>
    <lineage>
        <taxon>Bacteria</taxon>
        <taxon>Pseudomonadati</taxon>
        <taxon>Myxococcota</taxon>
        <taxon>Myxococcia</taxon>
        <taxon>Myxococcales</taxon>
        <taxon>Cystobacterineae</taxon>
        <taxon>Anaeromyxobacteraceae</taxon>
        <taxon>Anaeromyxobacter</taxon>
    </lineage>
</organism>
<feature type="chain" id="PRO_0000258944" description="Nucleotide-binding protein Adeh_0147">
    <location>
        <begin position="1"/>
        <end position="294"/>
    </location>
</feature>
<feature type="binding site" evidence="1">
    <location>
        <begin position="17"/>
        <end position="24"/>
    </location>
    <ligand>
        <name>ATP</name>
        <dbReference type="ChEBI" id="CHEBI:30616"/>
    </ligand>
</feature>
<feature type="binding site" evidence="1">
    <location>
        <begin position="68"/>
        <end position="71"/>
    </location>
    <ligand>
        <name>GTP</name>
        <dbReference type="ChEBI" id="CHEBI:37565"/>
    </ligand>
</feature>
<name>Y147_ANADE</name>
<protein>
    <recommendedName>
        <fullName evidence="1">Nucleotide-binding protein Adeh_0147</fullName>
    </recommendedName>
</protein>
<accession>Q2IM96</accession>